<accession>Q6IE38</accession>
<accession>M1EY23</accession>
<comment type="function">
    <text evidence="1">May be a serine protease inhibitor.</text>
</comment>
<comment type="subcellular location">
    <subcellularLocation>
        <location evidence="4">Secreted</location>
    </subcellularLocation>
</comment>
<gene>
    <name type="primary">SPINK14</name>
    <name type="synonym">SPINK5L2</name>
</gene>
<dbReference type="EMBL" id="JF509943">
    <property type="protein sequence ID" value="AFB83536.1"/>
    <property type="molecule type" value="mRNA"/>
</dbReference>
<dbReference type="EMBL" id="AC116334">
    <property type="status" value="NOT_ANNOTATED_CDS"/>
    <property type="molecule type" value="Genomic_DNA"/>
</dbReference>
<dbReference type="EMBL" id="BN000355">
    <property type="protein sequence ID" value="CAE51407.1"/>
    <property type="molecule type" value="mRNA"/>
</dbReference>
<dbReference type="CCDS" id="CCDS4288.1"/>
<dbReference type="RefSeq" id="NP_001001325.1">
    <property type="nucleotide sequence ID" value="NM_001001325.2"/>
</dbReference>
<dbReference type="RefSeq" id="XP_016864958.1">
    <property type="nucleotide sequence ID" value="XM_017009469.2"/>
</dbReference>
<dbReference type="SMR" id="Q6IE38"/>
<dbReference type="BioGRID" id="135914">
    <property type="interactions" value="15"/>
</dbReference>
<dbReference type="FunCoup" id="Q6IE38">
    <property type="interactions" value="8"/>
</dbReference>
<dbReference type="IntAct" id="Q6IE38">
    <property type="interactions" value="14"/>
</dbReference>
<dbReference type="STRING" id="9606.ENSP00000349459"/>
<dbReference type="MEROPS" id="I01.975"/>
<dbReference type="GlyCosmos" id="Q6IE38">
    <property type="glycosylation" value="1 site, No reported glycans"/>
</dbReference>
<dbReference type="GlyGen" id="Q6IE38">
    <property type="glycosylation" value="1 site"/>
</dbReference>
<dbReference type="BioMuta" id="SPINK14"/>
<dbReference type="DMDM" id="74724705"/>
<dbReference type="PaxDb" id="9606-ENSP00000349459"/>
<dbReference type="Antibodypedia" id="66284">
    <property type="antibodies" value="2 antibodies from 2 providers"/>
</dbReference>
<dbReference type="DNASU" id="408187"/>
<dbReference type="Ensembl" id="ENST00000356972.2">
    <property type="protein sequence ID" value="ENSP00000349459.1"/>
    <property type="gene ID" value="ENSG00000196800.7"/>
</dbReference>
<dbReference type="GeneID" id="408187"/>
<dbReference type="KEGG" id="hsa:408187"/>
<dbReference type="MANE-Select" id="ENST00000356972.2">
    <property type="protein sequence ID" value="ENSP00000349459.1"/>
    <property type="RefSeq nucleotide sequence ID" value="NM_001001325.2"/>
    <property type="RefSeq protein sequence ID" value="NP_001001325.1"/>
</dbReference>
<dbReference type="UCSC" id="uc031sls.2">
    <property type="organism name" value="human"/>
</dbReference>
<dbReference type="AGR" id="HGNC:33825"/>
<dbReference type="CTD" id="408187"/>
<dbReference type="GeneCards" id="SPINK14"/>
<dbReference type="HGNC" id="HGNC:33825">
    <property type="gene designation" value="SPINK14"/>
</dbReference>
<dbReference type="HPA" id="ENSG00000196800">
    <property type="expression patterns" value="Not detected"/>
</dbReference>
<dbReference type="neXtProt" id="NX_Q6IE38"/>
<dbReference type="OpenTargets" id="ENSG00000196800"/>
<dbReference type="PharmGKB" id="PA165660569"/>
<dbReference type="VEuPathDB" id="HostDB:ENSG00000196800"/>
<dbReference type="eggNOG" id="KOG3649">
    <property type="taxonomic scope" value="Eukaryota"/>
</dbReference>
<dbReference type="GeneTree" id="ENSGT00940000162856"/>
<dbReference type="HOGENOM" id="CLU_183157_0_0_1"/>
<dbReference type="InParanoid" id="Q6IE38"/>
<dbReference type="OMA" id="GRIKFYH"/>
<dbReference type="OrthoDB" id="126772at2759"/>
<dbReference type="PAN-GO" id="Q6IE38">
    <property type="GO annotations" value="0 GO annotations based on evolutionary models"/>
</dbReference>
<dbReference type="PhylomeDB" id="Q6IE38"/>
<dbReference type="PathwayCommons" id="Q6IE38"/>
<dbReference type="BioGRID-ORCS" id="408187">
    <property type="hits" value="27 hits in 1132 CRISPR screens"/>
</dbReference>
<dbReference type="ChiTaRS" id="SPINK14">
    <property type="organism name" value="human"/>
</dbReference>
<dbReference type="GenomeRNAi" id="408187"/>
<dbReference type="Pharos" id="Q6IE38">
    <property type="development level" value="Tdark"/>
</dbReference>
<dbReference type="PRO" id="PR:Q6IE38"/>
<dbReference type="Proteomes" id="UP000005640">
    <property type="component" value="Chromosome 5"/>
</dbReference>
<dbReference type="RNAct" id="Q6IE38">
    <property type="molecule type" value="protein"/>
</dbReference>
<dbReference type="Bgee" id="ENSG00000196800">
    <property type="expression patterns" value="Expressed in male germ line stem cell (sensu Vertebrata) in testis and 51 other cell types or tissues"/>
</dbReference>
<dbReference type="ExpressionAtlas" id="Q6IE38">
    <property type="expression patterns" value="baseline and differential"/>
</dbReference>
<dbReference type="GO" id="GO:0005576">
    <property type="term" value="C:extracellular region"/>
    <property type="evidence" value="ECO:0007669"/>
    <property type="project" value="UniProtKB-SubCell"/>
</dbReference>
<dbReference type="GO" id="GO:0004867">
    <property type="term" value="F:serine-type endopeptidase inhibitor activity"/>
    <property type="evidence" value="ECO:0007669"/>
    <property type="project" value="UniProtKB-KW"/>
</dbReference>
<dbReference type="CDD" id="cd01327">
    <property type="entry name" value="KAZAL_PSTI"/>
    <property type="match status" value="1"/>
</dbReference>
<dbReference type="Gene3D" id="3.30.60.30">
    <property type="match status" value="1"/>
</dbReference>
<dbReference type="InterPro" id="IPR050159">
    <property type="entry name" value="Kazal-type_SerProtInhib"/>
</dbReference>
<dbReference type="InterPro" id="IPR002350">
    <property type="entry name" value="Kazal_dom"/>
</dbReference>
<dbReference type="InterPro" id="IPR036058">
    <property type="entry name" value="Kazal_dom_sf"/>
</dbReference>
<dbReference type="PANTHER" id="PTHR47499:SF3">
    <property type="entry name" value="SERINE PROTEASE INHIBITOR KAZAL-TYPE 14"/>
    <property type="match status" value="1"/>
</dbReference>
<dbReference type="PANTHER" id="PTHR47499">
    <property type="entry name" value="SERINE PROTEASE INHIBITOR KAZAL-TYPE 7 SPINK7"/>
    <property type="match status" value="1"/>
</dbReference>
<dbReference type="Pfam" id="PF00050">
    <property type="entry name" value="Kazal_1"/>
    <property type="match status" value="1"/>
</dbReference>
<dbReference type="SMART" id="SM00280">
    <property type="entry name" value="KAZAL"/>
    <property type="match status" value="1"/>
</dbReference>
<dbReference type="SUPFAM" id="SSF100895">
    <property type="entry name" value="Kazal-type serine protease inhibitors"/>
    <property type="match status" value="1"/>
</dbReference>
<dbReference type="PROSITE" id="PS00282">
    <property type="entry name" value="KAZAL_1"/>
    <property type="match status" value="1"/>
</dbReference>
<dbReference type="PROSITE" id="PS51465">
    <property type="entry name" value="KAZAL_2"/>
    <property type="match status" value="1"/>
</dbReference>
<protein>
    <recommendedName>
        <fullName>Serine protease inhibitor Kazal-type 14</fullName>
    </recommendedName>
</protein>
<proteinExistence type="inferred from homology"/>
<keyword id="KW-1015">Disulfide bond</keyword>
<keyword id="KW-0325">Glycoprotein</keyword>
<keyword id="KW-0646">Protease inhibitor</keyword>
<keyword id="KW-1185">Reference proteome</keyword>
<keyword id="KW-0964">Secreted</keyword>
<keyword id="KW-0722">Serine protease inhibitor</keyword>
<keyword id="KW-0732">Signal</keyword>
<evidence type="ECO:0000250" key="1"/>
<evidence type="ECO:0000255" key="2"/>
<evidence type="ECO:0000255" key="3">
    <source>
        <dbReference type="PROSITE-ProRule" id="PRU00798"/>
    </source>
</evidence>
<evidence type="ECO:0000305" key="4"/>
<sequence>MAKSFPVFSLLSFILIHLVLSSVSGPRHWWPPRGIIKVKCPYEKVNLSWYNGTVNPCPGLYQPICGTNFITYDNPCILCVESLKSHGRIRFYHDGKC</sequence>
<organism>
    <name type="scientific">Homo sapiens</name>
    <name type="common">Human</name>
    <dbReference type="NCBI Taxonomy" id="9606"/>
    <lineage>
        <taxon>Eukaryota</taxon>
        <taxon>Metazoa</taxon>
        <taxon>Chordata</taxon>
        <taxon>Craniata</taxon>
        <taxon>Vertebrata</taxon>
        <taxon>Euteleostomi</taxon>
        <taxon>Mammalia</taxon>
        <taxon>Eutheria</taxon>
        <taxon>Euarchontoglires</taxon>
        <taxon>Primates</taxon>
        <taxon>Haplorrhini</taxon>
        <taxon>Catarrhini</taxon>
        <taxon>Hominidae</taxon>
        <taxon>Homo</taxon>
    </lineage>
</organism>
<reference key="1">
    <citation type="submission" date="2011-03" db="EMBL/GenBank/DDBJ databases">
        <title>A physiologic remnant of spliced leader trans-splicing in human cells?</title>
        <authorList>
            <person name="Wu Z."/>
        </authorList>
    </citation>
    <scope>NUCLEOTIDE SEQUENCE [MRNA]</scope>
</reference>
<reference key="2">
    <citation type="journal article" date="2003" name="Nature">
        <title>The DNA sequence and analysis of human chromosome 6.</title>
        <authorList>
            <person name="Mungall A.J."/>
            <person name="Palmer S.A."/>
            <person name="Sims S.K."/>
            <person name="Edwards C.A."/>
            <person name="Ashurst J.L."/>
            <person name="Wilming L."/>
            <person name="Jones M.C."/>
            <person name="Horton R."/>
            <person name="Hunt S.E."/>
            <person name="Scott C.E."/>
            <person name="Gilbert J.G.R."/>
            <person name="Clamp M.E."/>
            <person name="Bethel G."/>
            <person name="Milne S."/>
            <person name="Ainscough R."/>
            <person name="Almeida J.P."/>
            <person name="Ambrose K.D."/>
            <person name="Andrews T.D."/>
            <person name="Ashwell R.I.S."/>
            <person name="Babbage A.K."/>
            <person name="Bagguley C.L."/>
            <person name="Bailey J."/>
            <person name="Banerjee R."/>
            <person name="Barker D.J."/>
            <person name="Barlow K.F."/>
            <person name="Bates K."/>
            <person name="Beare D.M."/>
            <person name="Beasley H."/>
            <person name="Beasley O."/>
            <person name="Bird C.P."/>
            <person name="Blakey S.E."/>
            <person name="Bray-Allen S."/>
            <person name="Brook J."/>
            <person name="Brown A.J."/>
            <person name="Brown J.Y."/>
            <person name="Burford D.C."/>
            <person name="Burrill W."/>
            <person name="Burton J."/>
            <person name="Carder C."/>
            <person name="Carter N.P."/>
            <person name="Chapman J.C."/>
            <person name="Clark S.Y."/>
            <person name="Clark G."/>
            <person name="Clee C.M."/>
            <person name="Clegg S."/>
            <person name="Cobley V."/>
            <person name="Collier R.E."/>
            <person name="Collins J.E."/>
            <person name="Colman L.K."/>
            <person name="Corby N.R."/>
            <person name="Coville G.J."/>
            <person name="Culley K.M."/>
            <person name="Dhami P."/>
            <person name="Davies J."/>
            <person name="Dunn M."/>
            <person name="Earthrowl M.E."/>
            <person name="Ellington A.E."/>
            <person name="Evans K.A."/>
            <person name="Faulkner L."/>
            <person name="Francis M.D."/>
            <person name="Frankish A."/>
            <person name="Frankland J."/>
            <person name="French L."/>
            <person name="Garner P."/>
            <person name="Garnett J."/>
            <person name="Ghori M.J."/>
            <person name="Gilby L.M."/>
            <person name="Gillson C.J."/>
            <person name="Glithero R.J."/>
            <person name="Grafham D.V."/>
            <person name="Grant M."/>
            <person name="Gribble S."/>
            <person name="Griffiths C."/>
            <person name="Griffiths M.N.D."/>
            <person name="Hall R."/>
            <person name="Halls K.S."/>
            <person name="Hammond S."/>
            <person name="Harley J.L."/>
            <person name="Hart E.A."/>
            <person name="Heath P.D."/>
            <person name="Heathcott R."/>
            <person name="Holmes S.J."/>
            <person name="Howden P.J."/>
            <person name="Howe K.L."/>
            <person name="Howell G.R."/>
            <person name="Huckle E."/>
            <person name="Humphray S.J."/>
            <person name="Humphries M.D."/>
            <person name="Hunt A.R."/>
            <person name="Johnson C.M."/>
            <person name="Joy A.A."/>
            <person name="Kay M."/>
            <person name="Keenan S.J."/>
            <person name="Kimberley A.M."/>
            <person name="King A."/>
            <person name="Laird G.K."/>
            <person name="Langford C."/>
            <person name="Lawlor S."/>
            <person name="Leongamornlert D.A."/>
            <person name="Leversha M."/>
            <person name="Lloyd C.R."/>
            <person name="Lloyd D.M."/>
            <person name="Loveland J.E."/>
            <person name="Lovell J."/>
            <person name="Martin S."/>
            <person name="Mashreghi-Mohammadi M."/>
            <person name="Maslen G.L."/>
            <person name="Matthews L."/>
            <person name="McCann O.T."/>
            <person name="McLaren S.J."/>
            <person name="McLay K."/>
            <person name="McMurray A."/>
            <person name="Moore M.J.F."/>
            <person name="Mullikin J.C."/>
            <person name="Niblett D."/>
            <person name="Nickerson T."/>
            <person name="Novik K.L."/>
            <person name="Oliver K."/>
            <person name="Overton-Larty E.K."/>
            <person name="Parker A."/>
            <person name="Patel R."/>
            <person name="Pearce A.V."/>
            <person name="Peck A.I."/>
            <person name="Phillimore B.J.C.T."/>
            <person name="Phillips S."/>
            <person name="Plumb R.W."/>
            <person name="Porter K.M."/>
            <person name="Ramsey Y."/>
            <person name="Ranby S.A."/>
            <person name="Rice C.M."/>
            <person name="Ross M.T."/>
            <person name="Searle S.M."/>
            <person name="Sehra H.K."/>
            <person name="Sheridan E."/>
            <person name="Skuce C.D."/>
            <person name="Smith S."/>
            <person name="Smith M."/>
            <person name="Spraggon L."/>
            <person name="Squares S.L."/>
            <person name="Steward C.A."/>
            <person name="Sycamore N."/>
            <person name="Tamlyn-Hall G."/>
            <person name="Tester J."/>
            <person name="Theaker A.J."/>
            <person name="Thomas D.W."/>
            <person name="Thorpe A."/>
            <person name="Tracey A."/>
            <person name="Tromans A."/>
            <person name="Tubby B."/>
            <person name="Wall M."/>
            <person name="Wallis J.M."/>
            <person name="West A.P."/>
            <person name="White S.S."/>
            <person name="Whitehead S.L."/>
            <person name="Whittaker H."/>
            <person name="Wild A."/>
            <person name="Willey D.J."/>
            <person name="Wilmer T.E."/>
            <person name="Wood J.M."/>
            <person name="Wray P.W."/>
            <person name="Wyatt J.C."/>
            <person name="Young L."/>
            <person name="Younger R.M."/>
            <person name="Bentley D.R."/>
            <person name="Coulson A."/>
            <person name="Durbin R.M."/>
            <person name="Hubbard T."/>
            <person name="Sulston J.E."/>
            <person name="Dunham I."/>
            <person name="Rogers J."/>
            <person name="Beck S."/>
        </authorList>
    </citation>
    <scope>NUCLEOTIDE SEQUENCE [LARGE SCALE GENOMIC DNA]</scope>
</reference>
<reference key="3">
    <citation type="journal article" date="2004" name="Genome Res.">
        <title>A genomic analysis of rat proteases and protease inhibitors.</title>
        <authorList>
            <person name="Puente X.S."/>
            <person name="Lopez-Otin C."/>
        </authorList>
    </citation>
    <scope>IDENTIFICATION</scope>
</reference>
<name>ISK14_HUMAN</name>
<feature type="signal peptide" evidence="2">
    <location>
        <begin position="1"/>
        <end position="21"/>
    </location>
</feature>
<feature type="chain" id="PRO_5000095997" description="Serine protease inhibitor Kazal-type 14">
    <location>
        <begin position="22"/>
        <end position="97"/>
    </location>
</feature>
<feature type="domain" description="Kazal-like" evidence="3">
    <location>
        <begin position="34"/>
        <end position="97"/>
    </location>
</feature>
<feature type="site" description="Reactive bond" evidence="3">
    <location>
        <begin position="59"/>
        <end position="60"/>
    </location>
</feature>
<feature type="glycosylation site" description="N-linked (GlcNAc...) asparagine" evidence="2">
    <location>
        <position position="51"/>
    </location>
</feature>
<feature type="disulfide bond" evidence="3">
    <location>
        <begin position="40"/>
        <end position="79"/>
    </location>
</feature>
<feature type="disulfide bond" evidence="3">
    <location>
        <begin position="57"/>
        <end position="76"/>
    </location>
</feature>
<feature type="disulfide bond" evidence="3">
    <location>
        <begin position="65"/>
        <end position="97"/>
    </location>
</feature>